<comment type="function">
    <text evidence="1">Plays an essential role in transcription initiation and cap-stealing mechanism, in which cellular capped pre-mRNAs are used to generate primers for viral transcription. Recognizes and binds the 7-methylguanosine-containing cap of the target pre-RNA which is subsequently cleaved after 10-13 nucleotides by the viral protein PA. Plays a role in the initiation of the viral genome replication and modulates the activity of the ribonucleoprotein (RNP) complex.</text>
</comment>
<comment type="subunit">
    <text evidence="1">Influenza RNA polymerase is composed of three subunits: PB1, PB2 and PA. Interacts (via N-terminus) with PB1 (via C-terminus). Interacts with nucleoprotein NP (via N-terminus).</text>
</comment>
<comment type="subcellular location">
    <subcellularLocation>
        <location evidence="1">Virion</location>
    </subcellularLocation>
    <subcellularLocation>
        <location evidence="1">Host nucleus</location>
    </subcellularLocation>
</comment>
<comment type="similarity">
    <text evidence="1">Belongs to the influenza viruses PB2 family.</text>
</comment>
<proteinExistence type="inferred from homology"/>
<organism>
    <name type="scientific">Influenza A virus (strain A/Turkey/Ireland/1378/1983 H5N8)</name>
    <dbReference type="NCBI Taxonomy" id="380285"/>
    <lineage>
        <taxon>Viruses</taxon>
        <taxon>Riboviria</taxon>
        <taxon>Orthornavirae</taxon>
        <taxon>Negarnaviricota</taxon>
        <taxon>Polyploviricotina</taxon>
        <taxon>Insthoviricetes</taxon>
        <taxon>Articulavirales</taxon>
        <taxon>Orthomyxoviridae</taxon>
        <taxon>Alphainfluenzavirus</taxon>
        <taxon>Alphainfluenzavirus influenzae</taxon>
        <taxon>Influenza A virus</taxon>
    </lineage>
</organism>
<name>PB2_I83A4</name>
<keyword id="KW-1157">Cap snatching</keyword>
<keyword id="KW-1262">Eukaryotic host gene expression shutoff by virus</keyword>
<keyword id="KW-1191">Eukaryotic host transcription shutoff by virus</keyword>
<keyword id="KW-1190">Host gene expression shutoff by virus</keyword>
<keyword id="KW-1048">Host nucleus</keyword>
<keyword id="KW-0945">Host-virus interaction</keyword>
<keyword id="KW-1104">Inhibition of host RNA polymerase II by virus</keyword>
<keyword id="KW-0506">mRNA capping</keyword>
<keyword id="KW-0507">mRNA processing</keyword>
<keyword id="KW-1195">Viral transcription</keyword>
<keyword id="KW-0946">Virion</keyword>
<feature type="chain" id="PRO_0000279647" description="Polymerase basic protein 2">
    <location>
        <begin position="1"/>
        <end position="759"/>
    </location>
</feature>
<feature type="short sequence motif" description="Nuclear localization signal" evidence="1">
    <location>
        <begin position="736"/>
        <end position="739"/>
    </location>
</feature>
<feature type="site" description="Avian adaptation" evidence="1">
    <location>
        <position position="627"/>
    </location>
</feature>
<organismHost>
    <name type="scientific">Aves</name>
    <dbReference type="NCBI Taxonomy" id="8782"/>
</organismHost>
<reference key="1">
    <citation type="journal article" date="2006" name="Science">
        <title>Large-scale sequence analysis of avian influenza isolates.</title>
        <authorList>
            <person name="Obenauer J.C."/>
            <person name="Denson J."/>
            <person name="Mehta P.K."/>
            <person name="Su X."/>
            <person name="Mukatira S."/>
            <person name="Finkelstein D.B."/>
            <person name="Xu X."/>
            <person name="Wang J."/>
            <person name="Ma J."/>
            <person name="Fan Y."/>
            <person name="Rakestraw K.M."/>
            <person name="Webster R.G."/>
            <person name="Hoffmann E."/>
            <person name="Krauss S."/>
            <person name="Zheng J."/>
            <person name="Zhang Z."/>
            <person name="Naeve C.W."/>
        </authorList>
    </citation>
    <scope>NUCLEOTIDE SEQUENCE [GENOMIC RNA]</scope>
</reference>
<accession>Q0A2F5</accession>
<protein>
    <recommendedName>
        <fullName evidence="1">Polymerase basic protein 2</fullName>
    </recommendedName>
    <alternativeName>
        <fullName evidence="1">RNA-directed RNA polymerase subunit P3</fullName>
    </alternativeName>
</protein>
<gene>
    <name evidence="1" type="primary">PB2</name>
</gene>
<evidence type="ECO:0000255" key="1">
    <source>
        <dbReference type="HAMAP-Rule" id="MF_04062"/>
    </source>
</evidence>
<sequence length="759" mass="85875">MERIKELRDLMSQSRTREILTKTTVDHMAIIKKYTSGRQEKNPALRMKWMMAMKYPITADRRIMEMIPERNEQGQILWSKTNDAGSDRVMVSPLAVTWWNRNGPTTSTIHYPKVYKTYFEKVGRLKHGTFGPVHFRNQVKIRRRVDINPGHADLSAKEAQDVIMEVVFPNEVGARILTSESQLTITKEKKEELQDCKIAPLMVAYMLERELVRKTRFLPVAGGTSSVYIEVLHLTQGTCWEQMYTPGGEVRNDDVDQSLIIAARNIVRRATVSADPLASLLEMCHSTQIGGLRMVDILRQNPTEEQAVDICKAAMGLRISSSFSFGGFTFKRTSGSSVKREEEMLTGNLQTLKIRVHEGYEEFTMVGRRATAILRKATRRLIQLIVSGRDEQSIAEAIIVAMVFSQEDCMIKAVRGDLNFVNRANQRLNPMHQLLRHFQKDAKILFQNWGVEPIDNVMGMIGILPDMTPSTEMSLRGVRVSKTGVDEYSSTERIVVSIDRFLRVRDQRGNVLLSPEEVSETQGTEKLTITYSSSMMWEINGPESVLVNTYQWIIRNWETVKIQWSQNPTMLYNKMEFEPFQSLVPKAARGQYSGFVRALFQQMRDVLGTFDTVQIIKLLPFAAAPPEQSRMQFSSLTVNVRGSGMRIIVRGNSPVFNYNKATKRLTVLGKDAGALTEDPDEGTAGVESAVLRGFLILGKEDKRYGPALSINELSNLAKGEKANVLIGQGDVVLVMKRKRDSSILTDSQTATKRIRMAIN</sequence>
<dbReference type="EMBL" id="CY015096">
    <property type="protein sequence ID" value="ABI85127.1"/>
    <property type="molecule type" value="Genomic_RNA"/>
</dbReference>
<dbReference type="SMR" id="Q0A2F5"/>
<dbReference type="PRO" id="PR:Q0A2F5"/>
<dbReference type="Proteomes" id="UP000008583">
    <property type="component" value="Genome"/>
</dbReference>
<dbReference type="GO" id="GO:0042025">
    <property type="term" value="C:host cell nucleus"/>
    <property type="evidence" value="ECO:0007669"/>
    <property type="project" value="UniProtKB-SubCell"/>
</dbReference>
<dbReference type="GO" id="GO:0044423">
    <property type="term" value="C:virion component"/>
    <property type="evidence" value="ECO:0007669"/>
    <property type="project" value="UniProtKB-UniRule"/>
</dbReference>
<dbReference type="GO" id="GO:0003723">
    <property type="term" value="F:RNA binding"/>
    <property type="evidence" value="ECO:0007669"/>
    <property type="project" value="UniProtKB-UniRule"/>
</dbReference>
<dbReference type="GO" id="GO:0003968">
    <property type="term" value="F:RNA-directed RNA polymerase activity"/>
    <property type="evidence" value="ECO:0007669"/>
    <property type="project" value="UniProtKB-UniRule"/>
</dbReference>
<dbReference type="GO" id="GO:0006370">
    <property type="term" value="P:7-methylguanosine mRNA capping"/>
    <property type="evidence" value="ECO:0007669"/>
    <property type="project" value="UniProtKB-UniRule"/>
</dbReference>
<dbReference type="GO" id="GO:0075526">
    <property type="term" value="P:cap snatching"/>
    <property type="evidence" value="ECO:0007669"/>
    <property type="project" value="UniProtKB-UniRule"/>
</dbReference>
<dbReference type="GO" id="GO:0006351">
    <property type="term" value="P:DNA-templated transcription"/>
    <property type="evidence" value="ECO:0007669"/>
    <property type="project" value="UniProtKB-UniRule"/>
</dbReference>
<dbReference type="GO" id="GO:0039657">
    <property type="term" value="P:symbiont-mediated suppression of host gene expression"/>
    <property type="evidence" value="ECO:0007669"/>
    <property type="project" value="UniProtKB-KW"/>
</dbReference>
<dbReference type="GO" id="GO:0039523">
    <property type="term" value="P:symbiont-mediated suppression of host mRNA transcription via inhibition of RNA polymerase II activity"/>
    <property type="evidence" value="ECO:0007669"/>
    <property type="project" value="UniProtKB-UniRule"/>
</dbReference>
<dbReference type="GO" id="GO:0039694">
    <property type="term" value="P:viral RNA genome replication"/>
    <property type="evidence" value="ECO:0007669"/>
    <property type="project" value="InterPro"/>
</dbReference>
<dbReference type="FunFam" id="3.30.30.90:FF:000001">
    <property type="entry name" value="Polymerase basic protein 2"/>
    <property type="match status" value="1"/>
</dbReference>
<dbReference type="Gene3D" id="3.30.30.90">
    <property type="entry name" value="Polymerase Basic Protein 2, C-terminal domain"/>
    <property type="match status" value="1"/>
</dbReference>
<dbReference type="HAMAP" id="MF_04062">
    <property type="entry name" value="INV_PB2"/>
    <property type="match status" value="1"/>
</dbReference>
<dbReference type="InterPro" id="IPR049110">
    <property type="entry name" value="Flu_PB2_2nd"/>
</dbReference>
<dbReference type="InterPro" id="IPR049114">
    <property type="entry name" value="Flu_PB2_6th"/>
</dbReference>
<dbReference type="InterPro" id="IPR049115">
    <property type="entry name" value="Flu_PB2_C"/>
</dbReference>
<dbReference type="InterPro" id="IPR048298">
    <property type="entry name" value="Flu_PB2_CAP-bd"/>
</dbReference>
<dbReference type="InterPro" id="IPR049111">
    <property type="entry name" value="Flu_PB2_middle"/>
</dbReference>
<dbReference type="InterPro" id="IPR049106">
    <property type="entry name" value="Flu_PB2_N"/>
</dbReference>
<dbReference type="InterPro" id="IPR001591">
    <property type="entry name" value="INV_PB2"/>
</dbReference>
<dbReference type="InterPro" id="IPR049113">
    <property type="entry name" value="PB2_helical"/>
</dbReference>
<dbReference type="InterPro" id="IPR037258">
    <property type="entry name" value="PDB2_C"/>
</dbReference>
<dbReference type="Pfam" id="PF20947">
    <property type="entry name" value="Flu_PB2_1st"/>
    <property type="match status" value="1"/>
</dbReference>
<dbReference type="Pfam" id="PF20948">
    <property type="entry name" value="Flu_PB2_2nd"/>
    <property type="match status" value="1"/>
</dbReference>
<dbReference type="Pfam" id="PF20949">
    <property type="entry name" value="Flu_PB2_3rd"/>
    <property type="match status" value="1"/>
</dbReference>
<dbReference type="Pfam" id="PF20950">
    <property type="entry name" value="Flu_PB2_4th"/>
    <property type="match status" value="1"/>
</dbReference>
<dbReference type="Pfam" id="PF00604">
    <property type="entry name" value="Flu_PB2_5th"/>
    <property type="match status" value="1"/>
</dbReference>
<dbReference type="Pfam" id="PF20951">
    <property type="entry name" value="Flu_PB2_6th"/>
    <property type="match status" value="1"/>
</dbReference>
<dbReference type="Pfam" id="PF20952">
    <property type="entry name" value="Flu_PB2_7th"/>
    <property type="match status" value="1"/>
</dbReference>
<dbReference type="SUPFAM" id="SSF160453">
    <property type="entry name" value="PB2 C-terminal domain-like"/>
    <property type="match status" value="1"/>
</dbReference>